<gene>
    <name type="primary">DPY30</name>
</gene>
<organism>
    <name type="scientific">Homo sapiens</name>
    <name type="common">Human</name>
    <dbReference type="NCBI Taxonomy" id="9606"/>
    <lineage>
        <taxon>Eukaryota</taxon>
        <taxon>Metazoa</taxon>
        <taxon>Chordata</taxon>
        <taxon>Craniata</taxon>
        <taxon>Vertebrata</taxon>
        <taxon>Euteleostomi</taxon>
        <taxon>Mammalia</taxon>
        <taxon>Eutheria</taxon>
        <taxon>Euarchontoglires</taxon>
        <taxon>Primates</taxon>
        <taxon>Haplorrhini</taxon>
        <taxon>Catarrhini</taxon>
        <taxon>Hominidae</taxon>
        <taxon>Homo</taxon>
    </lineage>
</organism>
<dbReference type="EMBL" id="AF226998">
    <property type="protein sequence ID" value="AAK00640.1"/>
    <property type="molecule type" value="mRNA"/>
</dbReference>
<dbReference type="EMBL" id="CH471053">
    <property type="protein sequence ID" value="EAX00463.1"/>
    <property type="molecule type" value="Genomic_DNA"/>
</dbReference>
<dbReference type="EMBL" id="CH471053">
    <property type="protein sequence ID" value="EAX00466.1"/>
    <property type="molecule type" value="Genomic_DNA"/>
</dbReference>
<dbReference type="EMBL" id="BC015970">
    <property type="protein sequence ID" value="AAH15970.1"/>
    <property type="molecule type" value="mRNA"/>
</dbReference>
<dbReference type="CCDS" id="CCDS1777.1"/>
<dbReference type="RefSeq" id="NP_001308138.1">
    <property type="nucleotide sequence ID" value="NM_001321209.2"/>
</dbReference>
<dbReference type="RefSeq" id="NP_115963.1">
    <property type="nucleotide sequence ID" value="NM_032574.4"/>
</dbReference>
<dbReference type="PDB" id="3G36">
    <property type="method" value="X-ray"/>
    <property type="resolution" value="1.20 A"/>
    <property type="chains" value="A/B/C/D=45-99"/>
</dbReference>
<dbReference type="PDB" id="4RIQ">
    <property type="method" value="X-ray"/>
    <property type="resolution" value="2.23 A"/>
    <property type="chains" value="A/B/D/E/G/H/J/K/M/N/P/Q/S/T/V/Z=45-99"/>
</dbReference>
<dbReference type="PDB" id="4RT4">
    <property type="method" value="X-ray"/>
    <property type="resolution" value="2.00 A"/>
    <property type="chains" value="A/B/C/D=41-99"/>
</dbReference>
<dbReference type="PDB" id="4RTA">
    <property type="method" value="X-ray"/>
    <property type="resolution" value="2.12 A"/>
    <property type="chains" value="A/B=1-99"/>
</dbReference>
<dbReference type="PDB" id="6E2H">
    <property type="method" value="X-ray"/>
    <property type="resolution" value="2.24 A"/>
    <property type="chains" value="E/F=1-99"/>
</dbReference>
<dbReference type="PDB" id="6PWV">
    <property type="method" value="EM"/>
    <property type="resolution" value="6.20 A"/>
    <property type="chains" value="E/F=1-99"/>
</dbReference>
<dbReference type="PDB" id="7UD5">
    <property type="method" value="EM"/>
    <property type="resolution" value="4.25 A"/>
    <property type="chains" value="P/Q=1-99"/>
</dbReference>
<dbReference type="PDBsum" id="3G36"/>
<dbReference type="PDBsum" id="4RIQ"/>
<dbReference type="PDBsum" id="4RT4"/>
<dbReference type="PDBsum" id="4RTA"/>
<dbReference type="PDBsum" id="6E2H"/>
<dbReference type="PDBsum" id="6PWV"/>
<dbReference type="PDBsum" id="7UD5"/>
<dbReference type="EMDB" id="EMD-20512"/>
<dbReference type="EMDB" id="EMD-26454"/>
<dbReference type="SASBDB" id="Q9C005"/>
<dbReference type="SMR" id="Q9C005"/>
<dbReference type="BioGRID" id="124181">
    <property type="interactions" value="202"/>
</dbReference>
<dbReference type="ComplexPortal" id="CPX-5850">
    <property type="entry name" value="Histone-lysine N-methyltransferase complex, KMT2A variant"/>
</dbReference>
<dbReference type="ComplexPortal" id="CPX-7062">
    <property type="entry name" value="Histone-lysine N-methyltransferase complex, KMT2B variant"/>
</dbReference>
<dbReference type="ComplexPortal" id="CPX-7091">
    <property type="entry name" value="Histone-lysine N-methyltransferase complex, KMT2C variant"/>
</dbReference>
<dbReference type="ComplexPortal" id="CPX-7104">
    <property type="entry name" value="Histone-lysine N-methyltransferase complex, KMT2D variant"/>
</dbReference>
<dbReference type="ComplexPortal" id="CPX-7110">
    <property type="entry name" value="Histone-lysine N-methyltransferase complex, SET1A variant"/>
</dbReference>
<dbReference type="ComplexPortal" id="CPX-7111">
    <property type="entry name" value="Histone-lysine N-methyltransferase complex, SET1B variant"/>
</dbReference>
<dbReference type="CORUM" id="Q9C005"/>
<dbReference type="DIP" id="DIP-34476N"/>
<dbReference type="FunCoup" id="Q9C005">
    <property type="interactions" value="1915"/>
</dbReference>
<dbReference type="IntAct" id="Q9C005">
    <property type="interactions" value="120"/>
</dbReference>
<dbReference type="MINT" id="Q9C005"/>
<dbReference type="STRING" id="9606.ENSP00000345837"/>
<dbReference type="BindingDB" id="Q9C005"/>
<dbReference type="GlyGen" id="Q9C005">
    <property type="glycosylation" value="1 site, 1 O-linked glycan (1 site)"/>
</dbReference>
<dbReference type="iPTMnet" id="Q9C005"/>
<dbReference type="PhosphoSitePlus" id="Q9C005"/>
<dbReference type="BioMuta" id="DPY30"/>
<dbReference type="DMDM" id="14916555"/>
<dbReference type="jPOST" id="Q9C005"/>
<dbReference type="MassIVE" id="Q9C005"/>
<dbReference type="PaxDb" id="9606-ENSP00000345837"/>
<dbReference type="PeptideAtlas" id="Q9C005"/>
<dbReference type="ProteomicsDB" id="79938"/>
<dbReference type="Pumba" id="Q9C005"/>
<dbReference type="TopDownProteomics" id="Q9C005"/>
<dbReference type="Antibodypedia" id="51686">
    <property type="antibodies" value="65 antibodies from 17 providers"/>
</dbReference>
<dbReference type="DNASU" id="84661"/>
<dbReference type="Ensembl" id="ENST00000295066.3">
    <property type="protein sequence ID" value="ENSP00000295066.3"/>
    <property type="gene ID" value="ENSG00000162961.14"/>
</dbReference>
<dbReference type="Ensembl" id="ENST00000342166.10">
    <property type="protein sequence ID" value="ENSP00000345837.5"/>
    <property type="gene ID" value="ENSG00000162961.14"/>
</dbReference>
<dbReference type="GeneID" id="84661"/>
<dbReference type="KEGG" id="hsa:84661"/>
<dbReference type="MANE-Select" id="ENST00000342166.10">
    <property type="protein sequence ID" value="ENSP00000345837.5"/>
    <property type="RefSeq nucleotide sequence ID" value="NM_001321209.2"/>
    <property type="RefSeq protein sequence ID" value="NP_001308138.1"/>
</dbReference>
<dbReference type="UCSC" id="uc002roa.2">
    <property type="organism name" value="human"/>
</dbReference>
<dbReference type="AGR" id="HGNC:24590"/>
<dbReference type="CTD" id="84661"/>
<dbReference type="DisGeNET" id="84661"/>
<dbReference type="GeneCards" id="DPY30"/>
<dbReference type="HGNC" id="HGNC:24590">
    <property type="gene designation" value="DPY30"/>
</dbReference>
<dbReference type="HPA" id="ENSG00000162961">
    <property type="expression patterns" value="Low tissue specificity"/>
</dbReference>
<dbReference type="MIM" id="612032">
    <property type="type" value="gene"/>
</dbReference>
<dbReference type="neXtProt" id="NX_Q9C005"/>
<dbReference type="OpenTargets" id="ENSG00000162961"/>
<dbReference type="PharmGKB" id="PA162384063"/>
<dbReference type="VEuPathDB" id="HostDB:ENSG00000162961"/>
<dbReference type="eggNOG" id="KOG4109">
    <property type="taxonomic scope" value="Eukaryota"/>
</dbReference>
<dbReference type="GeneTree" id="ENSGT00390000008808"/>
<dbReference type="HOGENOM" id="CLU_135823_3_1_1"/>
<dbReference type="InParanoid" id="Q9C005"/>
<dbReference type="OMA" id="INYLAAY"/>
<dbReference type="OrthoDB" id="417678at2759"/>
<dbReference type="PAN-GO" id="Q9C005">
    <property type="GO annotations" value="2 GO annotations based on evolutionary models"/>
</dbReference>
<dbReference type="PhylomeDB" id="Q9C005"/>
<dbReference type="PathwayCommons" id="Q9C005"/>
<dbReference type="Reactome" id="R-HSA-3214841">
    <property type="pathway name" value="PKMTs methylate histone lysines"/>
</dbReference>
<dbReference type="Reactome" id="R-HSA-5617472">
    <property type="pathway name" value="Activation of anterior HOX genes in hindbrain development during early embryogenesis"/>
</dbReference>
<dbReference type="Reactome" id="R-HSA-8936459">
    <property type="pathway name" value="RUNX1 regulates genes involved in megakaryocyte differentiation and platelet function"/>
</dbReference>
<dbReference type="Reactome" id="R-HSA-9772755">
    <property type="pathway name" value="Formation of WDR5-containing histone-modifying complexes"/>
</dbReference>
<dbReference type="Reactome" id="R-HSA-9818564">
    <property type="pathway name" value="Epigenetic regulation of gene expression by MLL3 and MLL4 complexes"/>
</dbReference>
<dbReference type="Reactome" id="R-HSA-9841922">
    <property type="pathway name" value="MLL4 and MLL3 complexes regulate expression of PPARG target genes in adipogenesis and hepatic steatosis"/>
</dbReference>
<dbReference type="SignaLink" id="Q9C005"/>
<dbReference type="SIGNOR" id="Q9C005"/>
<dbReference type="BioGRID-ORCS" id="84661">
    <property type="hits" value="329 hits in 1143 CRISPR screens"/>
</dbReference>
<dbReference type="ChiTaRS" id="DPY30">
    <property type="organism name" value="human"/>
</dbReference>
<dbReference type="EvolutionaryTrace" id="Q9C005"/>
<dbReference type="GenomeRNAi" id="84661"/>
<dbReference type="Pharos" id="Q9C005">
    <property type="development level" value="Tbio"/>
</dbReference>
<dbReference type="PRO" id="PR:Q9C005"/>
<dbReference type="Proteomes" id="UP000005640">
    <property type="component" value="Chromosome 2"/>
</dbReference>
<dbReference type="RNAct" id="Q9C005">
    <property type="molecule type" value="protein"/>
</dbReference>
<dbReference type="Bgee" id="ENSG00000162961">
    <property type="expression patterns" value="Expressed in bronchial epithelial cell and 183 other cell types or tissues"/>
</dbReference>
<dbReference type="GO" id="GO:0005794">
    <property type="term" value="C:Golgi apparatus"/>
    <property type="evidence" value="ECO:0000314"/>
    <property type="project" value="HPA"/>
</dbReference>
<dbReference type="GO" id="GO:0035097">
    <property type="term" value="C:histone methyltransferase complex"/>
    <property type="evidence" value="ECO:0000314"/>
    <property type="project" value="UniProtKB"/>
</dbReference>
<dbReference type="GO" id="GO:0071339">
    <property type="term" value="C:MLL1 complex"/>
    <property type="evidence" value="ECO:0000353"/>
    <property type="project" value="ComplexPortal"/>
</dbReference>
<dbReference type="GO" id="GO:0044665">
    <property type="term" value="C:MLL1/2 complex"/>
    <property type="evidence" value="ECO:0000353"/>
    <property type="project" value="ComplexPortal"/>
</dbReference>
<dbReference type="GO" id="GO:0044666">
    <property type="term" value="C:MLL3/4 complex"/>
    <property type="evidence" value="ECO:0000314"/>
    <property type="project" value="UniProtKB"/>
</dbReference>
<dbReference type="GO" id="GO:0005654">
    <property type="term" value="C:nucleoplasm"/>
    <property type="evidence" value="ECO:0000314"/>
    <property type="project" value="HPA"/>
</dbReference>
<dbReference type="GO" id="GO:0005634">
    <property type="term" value="C:nucleus"/>
    <property type="evidence" value="ECO:0000314"/>
    <property type="project" value="UniProtKB"/>
</dbReference>
<dbReference type="GO" id="GO:0048188">
    <property type="term" value="C:Set1C/COMPASS complex"/>
    <property type="evidence" value="ECO:0000314"/>
    <property type="project" value="UniProtKB"/>
</dbReference>
<dbReference type="GO" id="GO:0005802">
    <property type="term" value="C:trans-Golgi network"/>
    <property type="evidence" value="ECO:0000314"/>
    <property type="project" value="UniProtKB"/>
</dbReference>
<dbReference type="GO" id="GO:0042802">
    <property type="term" value="F:identical protein binding"/>
    <property type="evidence" value="ECO:0000353"/>
    <property type="project" value="IntAct"/>
</dbReference>
<dbReference type="GO" id="GO:0042803">
    <property type="term" value="F:protein homodimerization activity"/>
    <property type="evidence" value="ECO:0000353"/>
    <property type="project" value="UniProtKB"/>
</dbReference>
<dbReference type="GO" id="GO:0016197">
    <property type="term" value="P:endosomal transport"/>
    <property type="evidence" value="ECO:0000315"/>
    <property type="project" value="UniProtKB"/>
</dbReference>
<dbReference type="GO" id="GO:0045815">
    <property type="term" value="P:transcription initiation-coupled chromatin remodeling"/>
    <property type="evidence" value="ECO:0000314"/>
    <property type="project" value="UniProtKB"/>
</dbReference>
<dbReference type="CDD" id="cd22965">
    <property type="entry name" value="DD_DPY30_SDC1"/>
    <property type="match status" value="1"/>
</dbReference>
<dbReference type="FunFam" id="1.20.890.10:FF:000003">
    <property type="entry name" value="protein dpy-30 homolog"/>
    <property type="match status" value="1"/>
</dbReference>
<dbReference type="Gene3D" id="1.20.890.10">
    <property type="entry name" value="cAMP-dependent protein kinase regulatory subunit, dimerization-anchoring domain"/>
    <property type="match status" value="1"/>
</dbReference>
<dbReference type="InterPro" id="IPR007858">
    <property type="entry name" value="Dpy-30_motif"/>
</dbReference>
<dbReference type="InterPro" id="IPR049629">
    <property type="entry name" value="DPY30_SDC1_DD"/>
</dbReference>
<dbReference type="InterPro" id="IPR037856">
    <property type="entry name" value="Sdc1/DPY30"/>
</dbReference>
<dbReference type="PANTHER" id="PTHR23356:SF16">
    <property type="entry name" value="DPY30 DOMAIN CONTAINING 2"/>
    <property type="match status" value="1"/>
</dbReference>
<dbReference type="PANTHER" id="PTHR23356">
    <property type="entry name" value="DPY30-RELATED"/>
    <property type="match status" value="1"/>
</dbReference>
<dbReference type="Pfam" id="PF05186">
    <property type="entry name" value="Dpy-30"/>
    <property type="match status" value="1"/>
</dbReference>
<protein>
    <recommendedName>
        <fullName>Protein dpy-30 homolog</fullName>
    </recommendedName>
    <alternativeName>
        <fullName>Dpy-30-like protein</fullName>
        <shortName>Dpy-30L</shortName>
    </alternativeName>
</protein>
<comment type="function">
    <text evidence="6 7 8">As part of the MLL1/MLL complex, involved in the methylation of histone H3 at 'Lys-4', particularly trimethylation. Histone H3 'Lys-4' methylation represents a specific tag for epigenetic transcriptional activation. May play some role in histone H3 acetylation. In a teratocarcinoma cell, plays a crucial role in retinoic acid-induced differentiation along the neural lineage, regulating gene induction and H3 'Lys-4' methylation at key developmental loci. May also play an indirect or direct role in endosomal transport.</text>
</comment>
<comment type="subunit">
    <text evidence="1 3 4 5 6 7">Homodimer. Core component of several methyltransferase-containing complexes including MLL1/MLL, MLL2/3 (also named ASCOM complex) and MLL4/WBP7. Each complex is at least composed of ASH2L, RBBP5, WDR5, DPY30, one or more specific histone methyltransferases (KMT2A/MLL1, KMT2D/MLL2, KMT2C/MLL3 and KMT2B/MLL4), and the facultative components MEN1, HCFC1, HCFC2, NCOA6, KDM6A, PAXIP1/PTIP, PAGR1 and alpha- and beta-tubulin (By similarity). Interacts with ASH2L; the interaction is direct. Interacts with ARFGEF1. Component of the SET1 complex, at least composed of the catalytic subunit (SETD1A or SETD1B), WDR5, WDR82, RBBP5, ASH2L/ASH2, CXXC1/CFP1, HCFC1 and DPY30.</text>
</comment>
<comment type="interaction">
    <interactant intactId="EBI-744973">
        <id>Q9C005</id>
    </interactant>
    <interactant intactId="EBI-8466265">
        <id>Q96MA6</id>
        <label>AK8</label>
    </interactant>
    <organismsDiffer>false</organismsDiffer>
    <experiments>3</experiments>
</comment>
<comment type="interaction">
    <interactant intactId="EBI-744973">
        <id>Q9C005</id>
    </interactant>
    <interactant intactId="EBI-2119626">
        <id>Q86UN6</id>
        <label>AKAP14</label>
    </interactant>
    <organismsDiffer>false</organismsDiffer>
    <experiments>3</experiments>
</comment>
<comment type="interaction">
    <interactant intactId="EBI-744973">
        <id>Q9C005</id>
    </interactant>
    <interactant intactId="EBI-1237481">
        <id>O43823</id>
        <label>AKAP8</label>
    </interactant>
    <organismsDiffer>false</organismsDiffer>
    <experiments>7</experiments>
</comment>
<comment type="interaction">
    <interactant intactId="EBI-744973">
        <id>Q9C005</id>
    </interactant>
    <interactant intactId="EBI-540797">
        <id>Q9UBL3</id>
        <label>ASH2L</label>
    </interactant>
    <organismsDiffer>false</organismsDiffer>
    <experiments>23</experiments>
</comment>
<comment type="interaction">
    <interactant intactId="EBI-744973">
        <id>Q9C005</id>
    </interactant>
    <interactant intactId="EBI-16130425">
        <id>Q9UBL3-3</id>
        <label>ASH2L</label>
    </interactant>
    <organismsDiffer>false</organismsDiffer>
    <experiments>7</experiments>
</comment>
<comment type="interaction">
    <interactant intactId="EBI-744973">
        <id>Q9C005</id>
    </interactant>
    <interactant intactId="EBI-4280811">
        <id>Q8IXM2</id>
        <label>BAP18</label>
    </interactant>
    <organismsDiffer>false</organismsDiffer>
    <experiments>3</experiments>
</comment>
<comment type="interaction">
    <interactant intactId="EBI-744973">
        <id>Q9C005</id>
    </interactant>
    <interactant intactId="EBI-13025473">
        <id>Q8TDM0-3</id>
        <label>BCAS4</label>
    </interactant>
    <organismsDiffer>false</organismsDiffer>
    <experiments>3</experiments>
</comment>
<comment type="interaction">
    <interactant intactId="EBI-744973">
        <id>Q9C005</id>
    </interactant>
    <interactant intactId="EBI-1211496">
        <id>Q5T5X7</id>
        <label>BEND3</label>
    </interactant>
    <organismsDiffer>false</organismsDiffer>
    <experiments>3</experiments>
</comment>
<comment type="interaction">
    <interactant intactId="EBI-744973">
        <id>Q9C005</id>
    </interactant>
    <interactant intactId="EBI-624648">
        <id>Q00537</id>
        <label>CDK17</label>
    </interactant>
    <organismsDiffer>false</organismsDiffer>
    <experiments>3</experiments>
</comment>
<comment type="interaction">
    <interactant intactId="EBI-744973">
        <id>Q9C005</id>
    </interactant>
    <interactant intactId="EBI-2119657">
        <id>Q7Z4T9</id>
        <label>CFAP91</label>
    </interactant>
    <organismsDiffer>false</organismsDiffer>
    <experiments>3</experiments>
</comment>
<comment type="interaction">
    <interactant intactId="EBI-744973">
        <id>Q9C005</id>
    </interactant>
    <interactant intactId="EBI-852194">
        <id>Q68CJ9</id>
        <label>CREB3L3</label>
    </interactant>
    <organismsDiffer>false</organismsDiffer>
    <experiments>3</experiments>
</comment>
<comment type="interaction">
    <interactant intactId="EBI-744973">
        <id>Q9C005</id>
    </interactant>
    <interactant intactId="EBI-744973">
        <id>Q9C005</id>
        <label>DPY30</label>
    </interactant>
    <organismsDiffer>false</organismsDiffer>
    <experiments>9</experiments>
</comment>
<comment type="interaction">
    <interactant intactId="EBI-744973">
        <id>Q9C005</id>
    </interactant>
    <interactant intactId="EBI-740680">
        <id>Q8WWB3</id>
        <label>DYDC1</label>
    </interactant>
    <organismsDiffer>false</organismsDiffer>
    <experiments>4</experiments>
</comment>
<comment type="interaction">
    <interactant intactId="EBI-744973">
        <id>Q9C005</id>
    </interactant>
    <interactant intactId="EBI-749277">
        <id>Q96IM9</id>
        <label>DYDC2</label>
    </interactant>
    <organismsDiffer>false</organismsDiffer>
    <experiments>3</experiments>
</comment>
<comment type="interaction">
    <interactant intactId="EBI-744973">
        <id>Q9C005</id>
    </interactant>
    <interactant intactId="EBI-373319">
        <id>Q96C01</id>
        <label>FAM136A</label>
    </interactant>
    <organismsDiffer>false</organismsDiffer>
    <experiments>3</experiments>
</comment>
<comment type="interaction">
    <interactant intactId="EBI-744973">
        <id>Q9C005</id>
    </interactant>
    <interactant intactId="EBI-12068108">
        <id>Q9NW75-2</id>
        <label>GPATCH2</label>
    </interactant>
    <organismsDiffer>false</organismsDiffer>
    <experiments>3</experiments>
</comment>
<comment type="interaction">
    <interactant intactId="EBI-744973">
        <id>Q9C005</id>
    </interactant>
    <interactant intactId="EBI-12033200">
        <id>P78347-2</id>
        <label>GTF2I</label>
    </interactant>
    <organismsDiffer>false</organismsDiffer>
    <experiments>7</experiments>
</comment>
<comment type="interaction">
    <interactant intactId="EBI-744973">
        <id>Q9C005</id>
    </interactant>
    <interactant intactId="EBI-12141931">
        <id>Q8NDH6-2</id>
        <label>ICA1L</label>
    </interactant>
    <organismsDiffer>false</organismsDiffer>
    <experiments>3</experiments>
</comment>
<comment type="interaction">
    <interactant intactId="EBI-744973">
        <id>Q9C005</id>
    </interactant>
    <interactant intactId="EBI-995714">
        <id>Q9Y605</id>
        <label>MRFAP1</label>
    </interactant>
    <organismsDiffer>false</organismsDiffer>
    <experiments>3</experiments>
</comment>
<comment type="interaction">
    <interactant intactId="EBI-744973">
        <id>Q9C005</id>
    </interactant>
    <interactant intactId="EBI-359720">
        <id>P17980</id>
        <label>PSMC3</label>
    </interactant>
    <organismsDiffer>false</organismsDiffer>
    <experiments>3</experiments>
</comment>
<comment type="interaction">
    <interactant intactId="EBI-744973">
        <id>Q9C005</id>
    </interactant>
    <interactant intactId="EBI-722193">
        <id>O00487</id>
        <label>PSMD14</label>
    </interactant>
    <organismsDiffer>false</organismsDiffer>
    <experiments>6</experiments>
</comment>
<comment type="interaction">
    <interactant intactId="EBI-744973">
        <id>Q9C005</id>
    </interactant>
    <interactant intactId="EBI-11954250">
        <id>P49023-2</id>
        <label>PXN</label>
    </interactant>
    <organismsDiffer>false</organismsDiffer>
    <experiments>3</experiments>
</comment>
<comment type="interaction">
    <interactant intactId="EBI-744973">
        <id>Q9C005</id>
    </interactant>
    <interactant intactId="EBI-6873025">
        <id>Q86UC2</id>
        <label>RSPH3</label>
    </interactant>
    <organismsDiffer>false</organismsDiffer>
    <experiments>3</experiments>
</comment>
<comment type="interaction">
    <interactant intactId="EBI-744973">
        <id>Q9C005</id>
    </interactant>
    <interactant intactId="EBI-19697726">
        <id>P0CW01</id>
        <label>TSPY10</label>
    </interactant>
    <organismsDiffer>false</organismsDiffer>
    <experiments>4</experiments>
</comment>
<comment type="interaction">
    <interactant intactId="EBI-744973">
        <id>Q9C005</id>
    </interactant>
    <interactant intactId="EBI-12817075">
        <id>A6NKD2</id>
        <label>TSPY2</label>
    </interactant>
    <organismsDiffer>false</organismsDiffer>
    <experiments>3</experiments>
</comment>
<comment type="interaction">
    <interactant intactId="EBI-744973">
        <id>Q9C005</id>
    </interactant>
    <interactant intactId="EBI-6448240">
        <id>Q96K21</id>
        <label>ZFYVE19</label>
    </interactant>
    <organismsDiffer>false</organismsDiffer>
    <experiments>3</experiments>
</comment>
<comment type="subcellular location">
    <subcellularLocation>
        <location evidence="7">Nucleus</location>
    </subcellularLocation>
    <subcellularLocation>
        <location evidence="7">Golgi apparatus</location>
        <location evidence="7">trans-Golgi network</location>
    </subcellularLocation>
    <text evidence="1">Associated with chromatin at regions enriched in histone H3 trimethylated at 'Lys-4. Highly enriched in gene promoter regions and 5' UTRs, but not in downstream regions of genes or 3' UTRs (By similarity).</text>
</comment>
<comment type="similarity">
    <text evidence="9">Belongs to the dpy-30 family.</text>
</comment>
<name>DPY30_HUMAN</name>
<evidence type="ECO:0000250" key="1"/>
<evidence type="ECO:0000256" key="2">
    <source>
        <dbReference type="SAM" id="MobiDB-lite"/>
    </source>
</evidence>
<evidence type="ECO:0000269" key="3">
    <source>
    </source>
</evidence>
<evidence type="ECO:0000269" key="4">
    <source>
    </source>
</evidence>
<evidence type="ECO:0000269" key="5">
    <source>
    </source>
</evidence>
<evidence type="ECO:0000269" key="6">
    <source>
    </source>
</evidence>
<evidence type="ECO:0000269" key="7">
    <source>
    </source>
</evidence>
<evidence type="ECO:0000269" key="8">
    <source>
    </source>
</evidence>
<evidence type="ECO:0000305" key="9"/>
<evidence type="ECO:0007744" key="10">
    <source>
    </source>
</evidence>
<evidence type="ECO:0007744" key="11">
    <source>
    </source>
</evidence>
<evidence type="ECO:0007744" key="12">
    <source>
    </source>
</evidence>
<evidence type="ECO:0007744" key="13">
    <source>
    </source>
</evidence>
<evidence type="ECO:0007744" key="14">
    <source>
    </source>
</evidence>
<evidence type="ECO:0007829" key="15">
    <source>
        <dbReference type="PDB" id="3G36"/>
    </source>
</evidence>
<evidence type="ECO:0007829" key="16">
    <source>
        <dbReference type="PDB" id="4RTA"/>
    </source>
</evidence>
<keyword id="KW-0002">3D-structure</keyword>
<keyword id="KW-0007">Acetylation</keyword>
<keyword id="KW-0156">Chromatin regulator</keyword>
<keyword id="KW-0333">Golgi apparatus</keyword>
<keyword id="KW-1017">Isopeptide bond</keyword>
<keyword id="KW-0539">Nucleus</keyword>
<keyword id="KW-0597">Phosphoprotein</keyword>
<keyword id="KW-1267">Proteomics identification</keyword>
<keyword id="KW-1185">Reference proteome</keyword>
<keyword id="KW-0804">Transcription</keyword>
<keyword id="KW-0805">Transcription regulation</keyword>
<keyword id="KW-0832">Ubl conjugation</keyword>
<proteinExistence type="evidence at protein level"/>
<accession>Q9C005</accession>
<accession>D6W578</accession>
<feature type="chain" id="PRO_0000114683" description="Protein dpy-30 homolog">
    <location>
        <begin position="1"/>
        <end position="99"/>
    </location>
</feature>
<feature type="region of interest" description="Disordered" evidence="2">
    <location>
        <begin position="1"/>
        <end position="26"/>
    </location>
</feature>
<feature type="modified residue" description="N-acetylmethionine" evidence="10 12">
    <location>
        <position position="1"/>
    </location>
</feature>
<feature type="modified residue" description="Phosphoserine" evidence="13">
    <location>
        <position position="19"/>
    </location>
</feature>
<feature type="modified residue" description="N6-acetyllysine; alternate" evidence="11">
    <location>
        <position position="35"/>
    </location>
</feature>
<feature type="cross-link" description="Glycyl lysine isopeptide (Lys-Gly) (interchain with G-Cter in SUMO2); alternate" evidence="14">
    <location>
        <position position="35"/>
    </location>
</feature>
<feature type="helix" evidence="16">
    <location>
        <begin position="31"/>
        <end position="34"/>
    </location>
</feature>
<feature type="helix" evidence="15">
    <location>
        <begin position="48"/>
        <end position="50"/>
    </location>
</feature>
<feature type="helix" evidence="15">
    <location>
        <begin position="53"/>
        <end position="58"/>
    </location>
</feature>
<feature type="turn" evidence="15">
    <location>
        <begin position="59"/>
        <end position="61"/>
    </location>
</feature>
<feature type="helix" evidence="15">
    <location>
        <begin position="62"/>
        <end position="75"/>
    </location>
</feature>
<feature type="helix" evidence="15">
    <location>
        <begin position="80"/>
        <end position="91"/>
    </location>
</feature>
<feature type="helix" evidence="15">
    <location>
        <begin position="92"/>
        <end position="95"/>
    </location>
</feature>
<reference key="1">
    <citation type="submission" date="2000-01" db="EMBL/GenBank/DDBJ databases">
        <title>Dystrophin-related protein 2 (DRP2) is located in the postsynaptic density of the CNS.</title>
        <authorList>
            <person name="Roberts R.G."/>
            <person name="Sheng M."/>
        </authorList>
    </citation>
    <scope>NUCLEOTIDE SEQUENCE [MRNA]</scope>
</reference>
<reference key="2">
    <citation type="submission" date="2005-09" db="EMBL/GenBank/DDBJ databases">
        <authorList>
            <person name="Mural R.J."/>
            <person name="Istrail S."/>
            <person name="Sutton G.G."/>
            <person name="Florea L."/>
            <person name="Halpern A.L."/>
            <person name="Mobarry C.M."/>
            <person name="Lippert R."/>
            <person name="Walenz B."/>
            <person name="Shatkay H."/>
            <person name="Dew I."/>
            <person name="Miller J.R."/>
            <person name="Flanigan M.J."/>
            <person name="Edwards N.J."/>
            <person name="Bolanos R."/>
            <person name="Fasulo D."/>
            <person name="Halldorsson B.V."/>
            <person name="Hannenhalli S."/>
            <person name="Turner R."/>
            <person name="Yooseph S."/>
            <person name="Lu F."/>
            <person name="Nusskern D.R."/>
            <person name="Shue B.C."/>
            <person name="Zheng X.H."/>
            <person name="Zhong F."/>
            <person name="Delcher A.L."/>
            <person name="Huson D.H."/>
            <person name="Kravitz S.A."/>
            <person name="Mouchard L."/>
            <person name="Reinert K."/>
            <person name="Remington K.A."/>
            <person name="Clark A.G."/>
            <person name="Waterman M.S."/>
            <person name="Eichler E.E."/>
            <person name="Adams M.D."/>
            <person name="Hunkapiller M.W."/>
            <person name="Myers E.W."/>
            <person name="Venter J.C."/>
        </authorList>
    </citation>
    <scope>NUCLEOTIDE SEQUENCE [LARGE SCALE GENOMIC DNA]</scope>
</reference>
<reference key="3">
    <citation type="journal article" date="2004" name="Genome Res.">
        <title>The status, quality, and expansion of the NIH full-length cDNA project: the Mammalian Gene Collection (MGC).</title>
        <authorList>
            <consortium name="The MGC Project Team"/>
        </authorList>
    </citation>
    <scope>NUCLEOTIDE SEQUENCE [LARGE SCALE MRNA]</scope>
    <source>
        <tissue>Urinary bladder</tissue>
    </source>
</reference>
<reference key="4">
    <citation type="journal article" date="2004" name="Mol. Cell">
        <title>Menin associates with a trithorax family histone methyltransferase complex and with the hoxc8 locus.</title>
        <authorList>
            <person name="Hughes C.M."/>
            <person name="Rozenblatt-Rosen O."/>
            <person name="Milne T.A."/>
            <person name="Copeland T.D."/>
            <person name="Levine S.S."/>
            <person name="Lee J.C."/>
            <person name="Hayes D.N."/>
            <person name="Shanmugam K.S."/>
            <person name="Bhattacharjee A."/>
            <person name="Biondi C.A."/>
            <person name="Kay G.F."/>
            <person name="Hayward N.K."/>
            <person name="Hess J.L."/>
            <person name="Meyerson M."/>
        </authorList>
    </citation>
    <scope>IDENTIFICATION IN THE MEN1-ASSOCIATED HISTONE METHYLTRANSFERASE COMPLEX</scope>
</reference>
<reference key="5">
    <citation type="journal article" date="2007" name="J. Biol. Chem.">
        <title>PTIP associates with MLL3- and MLL4-containing histone H3 lysine 4 methyltransferase complex.</title>
        <authorList>
            <person name="Cho Y.-W."/>
            <person name="Hong T."/>
            <person name="Hong S."/>
            <person name="Guo H."/>
            <person name="Yu H."/>
            <person name="Kim D."/>
            <person name="Guszczynski T."/>
            <person name="Dressler G.R."/>
            <person name="Copeland T.D."/>
            <person name="Kalkum M."/>
            <person name="Ge K."/>
        </authorList>
    </citation>
    <scope>IDENTIFICATION BY MASS SPECTROMETRY</scope>
    <scope>IDENTIFICATION IN THE MLL2/3 COMPLEX</scope>
</reference>
<reference key="6">
    <citation type="journal article" date="2008" name="Mol. Cell. Biol.">
        <title>Molecular regulation of H3K4 trimethylation by Wdr82, a component of human Set1/COMPASS.</title>
        <authorList>
            <person name="Wu M."/>
            <person name="Wang P.F."/>
            <person name="Lee J.S."/>
            <person name="Martin-Brown S."/>
            <person name="Florens L."/>
            <person name="Washburn M."/>
            <person name="Shilatifard A."/>
        </authorList>
    </citation>
    <scope>IDENTIFICATION IN SET1 COMPLEX</scope>
</reference>
<reference key="7">
    <citation type="journal article" date="2009" name="Anal. Chem.">
        <title>Lys-N and trypsin cover complementary parts of the phosphoproteome in a refined SCX-based approach.</title>
        <authorList>
            <person name="Gauci S."/>
            <person name="Helbig A.O."/>
            <person name="Slijper M."/>
            <person name="Krijgsveld J."/>
            <person name="Heck A.J."/>
            <person name="Mohammed S."/>
        </authorList>
    </citation>
    <scope>ACETYLATION [LARGE SCALE ANALYSIS] AT MET-1</scope>
    <scope>IDENTIFICATION BY MASS SPECTROMETRY [LARGE SCALE ANALYSIS]</scope>
</reference>
<reference key="8">
    <citation type="journal article" date="2009" name="J. Biol. Chem.">
        <title>On the mechanism of multiple lysine methylation by the human mixed lineage leukemia protein-1 (MLL1) core complex.</title>
        <authorList>
            <person name="Patel A."/>
            <person name="Dharmarajan V."/>
            <person name="Vought V.E."/>
            <person name="Cosgrove M.S."/>
        </authorList>
    </citation>
    <scope>FUNCTION</scope>
    <scope>DIMERIZATION</scope>
    <scope>CHARACTERIZATION OF THE MLL1/MLL COMPLEX</scope>
    <scope>INTERACTION WITH ASH2L</scope>
</reference>
<reference key="9">
    <citation type="journal article" date="2009" name="J. Cell Biol.">
        <title>A role of histone H3 lysine 4 methyltransferase components in endosomal trafficking.</title>
        <authorList>
            <person name="Xu Z."/>
            <person name="Gong Q."/>
            <person name="Xia B."/>
            <person name="Groves B."/>
            <person name="Zimmermann M."/>
            <person name="Mugler C."/>
            <person name="Mu D."/>
            <person name="Matsumoto B."/>
            <person name="Seaman M."/>
            <person name="Ma D."/>
        </authorList>
    </citation>
    <scope>FUNCTION</scope>
    <scope>SUBCELLULAR LOCATION</scope>
    <scope>INTERACTION WITH ARFGEF1</scope>
</reference>
<reference key="10">
    <citation type="journal article" date="2009" name="Science">
        <title>Lysine acetylation targets protein complexes and co-regulates major cellular functions.</title>
        <authorList>
            <person name="Choudhary C."/>
            <person name="Kumar C."/>
            <person name="Gnad F."/>
            <person name="Nielsen M.L."/>
            <person name="Rehman M."/>
            <person name="Walther T.C."/>
            <person name="Olsen J.V."/>
            <person name="Mann M."/>
        </authorList>
    </citation>
    <scope>ACETYLATION [LARGE SCALE ANALYSIS] AT LYS-35</scope>
    <scope>IDENTIFICATION BY MASS SPECTROMETRY [LARGE SCALE ANALYSIS]</scope>
</reference>
<reference key="11">
    <citation type="journal article" date="2011" name="BMC Syst. Biol.">
        <title>Initial characterization of the human central proteome.</title>
        <authorList>
            <person name="Burkard T.R."/>
            <person name="Planyavsky M."/>
            <person name="Kaupe I."/>
            <person name="Breitwieser F.P."/>
            <person name="Buerckstuemmer T."/>
            <person name="Bennett K.L."/>
            <person name="Superti-Furga G."/>
            <person name="Colinge J."/>
        </authorList>
    </citation>
    <scope>IDENTIFICATION BY MASS SPECTROMETRY [LARGE SCALE ANALYSIS]</scope>
</reference>
<reference key="12">
    <citation type="journal article" date="2011" name="Cell">
        <title>Role for Dpy-30 in ES cell-fate specification by regulation of H3K4 methylation within bivalent domains.</title>
        <authorList>
            <person name="Jiang H."/>
            <person name="Shukla A."/>
            <person name="Wang X."/>
            <person name="Chen W.Y."/>
            <person name="Bernstein B.E."/>
            <person name="Roeder R.G."/>
        </authorList>
    </citation>
    <scope>FUNCTION</scope>
</reference>
<reference key="13">
    <citation type="journal article" date="2012" name="Proc. Natl. Acad. Sci. U.S.A.">
        <title>N-terminal acetylome analyses and functional insights of the N-terminal acetyltransferase NatB.</title>
        <authorList>
            <person name="Van Damme P."/>
            <person name="Lasa M."/>
            <person name="Polevoda B."/>
            <person name="Gazquez C."/>
            <person name="Elosegui-Artola A."/>
            <person name="Kim D.S."/>
            <person name="De Juan-Pardo E."/>
            <person name="Demeyer K."/>
            <person name="Hole K."/>
            <person name="Larrea E."/>
            <person name="Timmerman E."/>
            <person name="Prieto J."/>
            <person name="Arnesen T."/>
            <person name="Sherman F."/>
            <person name="Gevaert K."/>
            <person name="Aldabe R."/>
        </authorList>
    </citation>
    <scope>ACETYLATION [LARGE SCALE ANALYSIS] AT MET-1</scope>
    <scope>IDENTIFICATION BY MASS SPECTROMETRY [LARGE SCALE ANALYSIS]</scope>
</reference>
<reference key="14">
    <citation type="journal article" date="2014" name="J. Proteomics">
        <title>An enzyme assisted RP-RPLC approach for in-depth analysis of human liver phosphoproteome.</title>
        <authorList>
            <person name="Bian Y."/>
            <person name="Song C."/>
            <person name="Cheng K."/>
            <person name="Dong M."/>
            <person name="Wang F."/>
            <person name="Huang J."/>
            <person name="Sun D."/>
            <person name="Wang L."/>
            <person name="Ye M."/>
            <person name="Zou H."/>
        </authorList>
    </citation>
    <scope>PHOSPHORYLATION [LARGE SCALE ANALYSIS] AT SER-19</scope>
    <scope>IDENTIFICATION BY MASS SPECTROMETRY [LARGE SCALE ANALYSIS]</scope>
    <source>
        <tissue>Liver</tissue>
    </source>
</reference>
<reference key="15">
    <citation type="journal article" date="2017" name="Nat. Struct. Mol. Biol.">
        <title>Site-specific mapping of the human SUMO proteome reveals co-modification with phosphorylation.</title>
        <authorList>
            <person name="Hendriks I.A."/>
            <person name="Lyon D."/>
            <person name="Young C."/>
            <person name="Jensen L.J."/>
            <person name="Vertegaal A.C."/>
            <person name="Nielsen M.L."/>
        </authorList>
    </citation>
    <scope>SUMOYLATION [LARGE SCALE ANALYSIS] AT LYS-35</scope>
    <scope>IDENTIFICATION BY MASS SPECTROMETRY [LARGE SCALE ANALYSIS]</scope>
</reference>
<reference key="16">
    <citation type="journal article" date="2009" name="J. Mol. Biol.">
        <title>Crystal structure of the C-terminal domain of human DPY-30-like protein: A component of the histone methyltransferase complex.</title>
        <authorList>
            <person name="Wang X."/>
            <person name="Lou Z."/>
            <person name="Dong X."/>
            <person name="Yang W."/>
            <person name="Peng Y."/>
            <person name="Yin B."/>
            <person name="Gong Y."/>
            <person name="Yuan J."/>
            <person name="Zhou W."/>
            <person name="Bartlam M."/>
            <person name="Peng X."/>
            <person name="Rao Z."/>
        </authorList>
    </citation>
    <scope>X-RAY CRYSTALLOGRAPHY (1.20 ANGSTROMS) OF 45-99</scope>
    <scope>DIMERIZATION</scope>
</reference>
<sequence length="99" mass="11250">MEPEQMLEGQTQVAENPHSEYGLTDNVERIVENEKINAEKSSKQKVDLQSLPTRAYLDQTVVPILLQGLAVLAKERPPNPIEFLASYLLKNKAQFEDRN</sequence>